<feature type="chain" id="PRO_0000290881" description="Small ribosomal subunit protein uS8">
    <location>
        <begin position="1"/>
        <end position="132"/>
    </location>
</feature>
<accession>A1UBQ2</accession>
<comment type="function">
    <text evidence="1">One of the primary rRNA binding proteins, it binds directly to 16S rRNA central domain where it helps coordinate assembly of the platform of the 30S subunit.</text>
</comment>
<comment type="subunit">
    <text evidence="1">Part of the 30S ribosomal subunit. Contacts proteins S5 and S12.</text>
</comment>
<comment type="similarity">
    <text evidence="1">Belongs to the universal ribosomal protein uS8 family.</text>
</comment>
<reference key="1">
    <citation type="submission" date="2006-12" db="EMBL/GenBank/DDBJ databases">
        <title>Complete sequence of chromosome of Mycobacterium sp. KMS.</title>
        <authorList>
            <consortium name="US DOE Joint Genome Institute"/>
            <person name="Copeland A."/>
            <person name="Lucas S."/>
            <person name="Lapidus A."/>
            <person name="Barry K."/>
            <person name="Detter J.C."/>
            <person name="Glavina del Rio T."/>
            <person name="Hammon N."/>
            <person name="Israni S."/>
            <person name="Dalin E."/>
            <person name="Tice H."/>
            <person name="Pitluck S."/>
            <person name="Kiss H."/>
            <person name="Brettin T."/>
            <person name="Bruce D."/>
            <person name="Han C."/>
            <person name="Tapia R."/>
            <person name="Gilna P."/>
            <person name="Schmutz J."/>
            <person name="Larimer F."/>
            <person name="Land M."/>
            <person name="Hauser L."/>
            <person name="Kyrpides N."/>
            <person name="Mikhailova N."/>
            <person name="Miller C.D."/>
            <person name="Richardson P."/>
        </authorList>
    </citation>
    <scope>NUCLEOTIDE SEQUENCE [LARGE SCALE GENOMIC DNA]</scope>
    <source>
        <strain>KMS</strain>
    </source>
</reference>
<name>RS8_MYCSK</name>
<protein>
    <recommendedName>
        <fullName evidence="1">Small ribosomal subunit protein uS8</fullName>
    </recommendedName>
    <alternativeName>
        <fullName evidence="2">30S ribosomal protein S8</fullName>
    </alternativeName>
</protein>
<sequence>MTMTDPIADFLTRLRNANSAYHDEVTLPHSKIKANIAEILKSEGYISDYRTEDARVGKSLVVQLKYGPSRERSIAGLRRVSKPGLRVYAKSTNLPRVLGGLGVAIISTSSGLLTDRQAARSGVGGEVLAYVW</sequence>
<evidence type="ECO:0000255" key="1">
    <source>
        <dbReference type="HAMAP-Rule" id="MF_01302"/>
    </source>
</evidence>
<evidence type="ECO:0000305" key="2"/>
<keyword id="KW-0687">Ribonucleoprotein</keyword>
<keyword id="KW-0689">Ribosomal protein</keyword>
<keyword id="KW-0694">RNA-binding</keyword>
<keyword id="KW-0699">rRNA-binding</keyword>
<dbReference type="EMBL" id="CP000518">
    <property type="protein sequence ID" value="ABL90260.1"/>
    <property type="molecule type" value="Genomic_DNA"/>
</dbReference>
<dbReference type="SMR" id="A1UBQ2"/>
<dbReference type="STRING" id="189918.Mkms_1046"/>
<dbReference type="KEGG" id="mkm:Mkms_1046"/>
<dbReference type="HOGENOM" id="CLU_098428_0_1_11"/>
<dbReference type="OrthoDB" id="9802617at2"/>
<dbReference type="GO" id="GO:1990904">
    <property type="term" value="C:ribonucleoprotein complex"/>
    <property type="evidence" value="ECO:0007669"/>
    <property type="project" value="UniProtKB-KW"/>
</dbReference>
<dbReference type="GO" id="GO:0005840">
    <property type="term" value="C:ribosome"/>
    <property type="evidence" value="ECO:0007669"/>
    <property type="project" value="UniProtKB-KW"/>
</dbReference>
<dbReference type="GO" id="GO:0019843">
    <property type="term" value="F:rRNA binding"/>
    <property type="evidence" value="ECO:0007669"/>
    <property type="project" value="UniProtKB-UniRule"/>
</dbReference>
<dbReference type="GO" id="GO:0003735">
    <property type="term" value="F:structural constituent of ribosome"/>
    <property type="evidence" value="ECO:0007669"/>
    <property type="project" value="InterPro"/>
</dbReference>
<dbReference type="GO" id="GO:0006412">
    <property type="term" value="P:translation"/>
    <property type="evidence" value="ECO:0007669"/>
    <property type="project" value="UniProtKB-UniRule"/>
</dbReference>
<dbReference type="FunFam" id="3.30.1370.30:FF:000002">
    <property type="entry name" value="30S ribosomal protein S8"/>
    <property type="match status" value="1"/>
</dbReference>
<dbReference type="FunFam" id="3.30.1490.10:FF:000001">
    <property type="entry name" value="30S ribosomal protein S8"/>
    <property type="match status" value="1"/>
</dbReference>
<dbReference type="Gene3D" id="3.30.1370.30">
    <property type="match status" value="1"/>
</dbReference>
<dbReference type="Gene3D" id="3.30.1490.10">
    <property type="match status" value="1"/>
</dbReference>
<dbReference type="HAMAP" id="MF_01302_B">
    <property type="entry name" value="Ribosomal_uS8_B"/>
    <property type="match status" value="1"/>
</dbReference>
<dbReference type="InterPro" id="IPR000630">
    <property type="entry name" value="Ribosomal_uS8"/>
</dbReference>
<dbReference type="InterPro" id="IPR047863">
    <property type="entry name" value="Ribosomal_uS8_CS"/>
</dbReference>
<dbReference type="InterPro" id="IPR035987">
    <property type="entry name" value="Ribosomal_uS8_sf"/>
</dbReference>
<dbReference type="NCBIfam" id="NF001109">
    <property type="entry name" value="PRK00136.1"/>
    <property type="match status" value="1"/>
</dbReference>
<dbReference type="PANTHER" id="PTHR11758">
    <property type="entry name" value="40S RIBOSOMAL PROTEIN S15A"/>
    <property type="match status" value="1"/>
</dbReference>
<dbReference type="Pfam" id="PF00410">
    <property type="entry name" value="Ribosomal_S8"/>
    <property type="match status" value="1"/>
</dbReference>
<dbReference type="SUPFAM" id="SSF56047">
    <property type="entry name" value="Ribosomal protein S8"/>
    <property type="match status" value="1"/>
</dbReference>
<dbReference type="PROSITE" id="PS00053">
    <property type="entry name" value="RIBOSOMAL_S8"/>
    <property type="match status" value="1"/>
</dbReference>
<proteinExistence type="inferred from homology"/>
<gene>
    <name evidence="1" type="primary">rpsH</name>
    <name type="ordered locus">Mkms_1046</name>
</gene>
<organism>
    <name type="scientific">Mycobacterium sp. (strain KMS)</name>
    <dbReference type="NCBI Taxonomy" id="189918"/>
    <lineage>
        <taxon>Bacteria</taxon>
        <taxon>Bacillati</taxon>
        <taxon>Actinomycetota</taxon>
        <taxon>Actinomycetes</taxon>
        <taxon>Mycobacteriales</taxon>
        <taxon>Mycobacteriaceae</taxon>
        <taxon>Mycobacterium</taxon>
    </lineage>
</organism>